<gene>
    <name type="primary">PAN5</name>
    <name type="ordered locus">YHR063C</name>
</gene>
<proteinExistence type="evidence at protein level"/>
<name>PANE_YEAST</name>
<sequence length="379" mass="42821">MTAPHRSTIHILGLGAMGTVLAVDLLRFTNALVVPLFRSQERLAQFQKTNGNNISIRKLYLEGSPIFSYPVEKCECPETFSKKPIDNLVVTTKTYQTKEALAPYLPYINKNTNLILIQNGLGVLELLREEIFTDSKNRPHLFQGVISHGVYQDKAGVFNHAGWAGMKIAKLPWTEEEMIQKKSVVEDDAANNSLVKLLTEPKFAKEFGIEHSTYQEMLFGQLFKFLVNACMNPVTAILDCVNGEMKASCGPVFTSIIDECLQILRVAYRPLFQYHEKYSGNEEYPEMDVNAVLTTDNMVSEVTRIGCDINSRNSSSMRQDTLFLRDIEIEYINGYVVKLADNLNLDPNCCKVNKTIGELATMRLALNRSRSINGDWRKD</sequence>
<keyword id="KW-0521">NADP</keyword>
<keyword id="KW-0560">Oxidoreductase</keyword>
<keyword id="KW-0566">Pantothenate biosynthesis</keyword>
<keyword id="KW-1185">Reference proteome</keyword>
<reference key="1">
    <citation type="journal article" date="1994" name="Science">
        <title>Complete nucleotide sequence of Saccharomyces cerevisiae chromosome VIII.</title>
        <authorList>
            <person name="Johnston M."/>
            <person name="Andrews S."/>
            <person name="Brinkman R."/>
            <person name="Cooper J."/>
            <person name="Ding H."/>
            <person name="Dover J."/>
            <person name="Du Z."/>
            <person name="Favello A."/>
            <person name="Fulton L."/>
            <person name="Gattung S."/>
            <person name="Geisel C."/>
            <person name="Kirsten J."/>
            <person name="Kucaba T."/>
            <person name="Hillier L.W."/>
            <person name="Jier M."/>
            <person name="Johnston L."/>
            <person name="Langston Y."/>
            <person name="Latreille P."/>
            <person name="Louis E.J."/>
            <person name="Macri C."/>
            <person name="Mardis E."/>
            <person name="Menezes S."/>
            <person name="Mouser L."/>
            <person name="Nhan M."/>
            <person name="Rifkin L."/>
            <person name="Riles L."/>
            <person name="St Peter H."/>
            <person name="Trevaskis E."/>
            <person name="Vaughan K."/>
            <person name="Vignati D."/>
            <person name="Wilcox L."/>
            <person name="Wohldman P."/>
            <person name="Waterston R."/>
            <person name="Wilson R."/>
            <person name="Vaudin M."/>
        </authorList>
    </citation>
    <scope>NUCLEOTIDE SEQUENCE [LARGE SCALE GENOMIC DNA]</scope>
    <source>
        <strain>ATCC 204508 / S288c</strain>
    </source>
</reference>
<reference key="2">
    <citation type="journal article" date="2014" name="G3 (Bethesda)">
        <title>The reference genome sequence of Saccharomyces cerevisiae: Then and now.</title>
        <authorList>
            <person name="Engel S.R."/>
            <person name="Dietrich F.S."/>
            <person name="Fisk D.G."/>
            <person name="Binkley G."/>
            <person name="Balakrishnan R."/>
            <person name="Costanzo M.C."/>
            <person name="Dwight S.S."/>
            <person name="Hitz B.C."/>
            <person name="Karra K."/>
            <person name="Nash R.S."/>
            <person name="Weng S."/>
            <person name="Wong E.D."/>
            <person name="Lloyd P."/>
            <person name="Skrzypek M.S."/>
            <person name="Miyasato S.R."/>
            <person name="Simison M."/>
            <person name="Cherry J.M."/>
        </authorList>
    </citation>
    <scope>GENOME REANNOTATION</scope>
    <source>
        <strain>ATCC 204508 / S288c</strain>
    </source>
</reference>
<reference key="3">
    <citation type="journal article" date="2003" name="Nature">
        <title>Global analysis of protein expression in yeast.</title>
        <authorList>
            <person name="Ghaemmaghami S."/>
            <person name="Huh W.-K."/>
            <person name="Bower K."/>
            <person name="Howson R.W."/>
            <person name="Belle A."/>
            <person name="Dephoure N."/>
            <person name="O'Shea E.K."/>
            <person name="Weissman J.S."/>
        </authorList>
    </citation>
    <scope>LEVEL OF PROTEIN EXPRESSION [LARGE SCALE ANALYSIS]</scope>
</reference>
<protein>
    <recommendedName>
        <fullName>2-dehydropantoate 2-reductase</fullName>
        <ecNumber>1.1.1.169</ecNumber>
    </recommendedName>
    <alternativeName>
        <fullName>Ketopantoate reductase</fullName>
        <shortName>KPA reductase</shortName>
        <shortName>KPR</shortName>
    </alternativeName>
</protein>
<evidence type="ECO:0000250" key="1"/>
<evidence type="ECO:0000269" key="2">
    <source>
    </source>
</evidence>
<evidence type="ECO:0000305" key="3"/>
<organism>
    <name type="scientific">Saccharomyces cerevisiae (strain ATCC 204508 / S288c)</name>
    <name type="common">Baker's yeast</name>
    <dbReference type="NCBI Taxonomy" id="559292"/>
    <lineage>
        <taxon>Eukaryota</taxon>
        <taxon>Fungi</taxon>
        <taxon>Dikarya</taxon>
        <taxon>Ascomycota</taxon>
        <taxon>Saccharomycotina</taxon>
        <taxon>Saccharomycetes</taxon>
        <taxon>Saccharomycetales</taxon>
        <taxon>Saccharomycetaceae</taxon>
        <taxon>Saccharomyces</taxon>
    </lineage>
</organism>
<dbReference type="EC" id="1.1.1.169"/>
<dbReference type="EMBL" id="U00061">
    <property type="protein sequence ID" value="AAB68390.1"/>
    <property type="molecule type" value="Genomic_DNA"/>
</dbReference>
<dbReference type="EMBL" id="BK006934">
    <property type="protein sequence ID" value="DAA06756.1"/>
    <property type="molecule type" value="Genomic_DNA"/>
</dbReference>
<dbReference type="PIR" id="S46711">
    <property type="entry name" value="S46711"/>
</dbReference>
<dbReference type="RefSeq" id="NP_011930.1">
    <property type="nucleotide sequence ID" value="NM_001179193.1"/>
</dbReference>
<dbReference type="SMR" id="P38787"/>
<dbReference type="BioGRID" id="36495">
    <property type="interactions" value="52"/>
</dbReference>
<dbReference type="DIP" id="DIP-5591N"/>
<dbReference type="FunCoup" id="P38787">
    <property type="interactions" value="184"/>
</dbReference>
<dbReference type="IntAct" id="P38787">
    <property type="interactions" value="5"/>
</dbReference>
<dbReference type="MINT" id="P38787"/>
<dbReference type="STRING" id="4932.YHR063C"/>
<dbReference type="iPTMnet" id="P38787"/>
<dbReference type="PaxDb" id="4932-YHR063C"/>
<dbReference type="PeptideAtlas" id="P38787"/>
<dbReference type="EnsemblFungi" id="YHR063C_mRNA">
    <property type="protein sequence ID" value="YHR063C"/>
    <property type="gene ID" value="YHR063C"/>
</dbReference>
<dbReference type="GeneID" id="856460"/>
<dbReference type="KEGG" id="sce:YHR063C"/>
<dbReference type="AGR" id="SGD:S000001105"/>
<dbReference type="SGD" id="S000001105">
    <property type="gene designation" value="PAN5"/>
</dbReference>
<dbReference type="VEuPathDB" id="FungiDB:YHR063C"/>
<dbReference type="eggNOG" id="ENOG502QPT5">
    <property type="taxonomic scope" value="Eukaryota"/>
</dbReference>
<dbReference type="GeneTree" id="ENSGT00940000176320"/>
<dbReference type="HOGENOM" id="CLU_031468_10_2_1"/>
<dbReference type="InParanoid" id="P38787"/>
<dbReference type="OMA" id="KFLVNCC"/>
<dbReference type="OrthoDB" id="73846at2759"/>
<dbReference type="BioCyc" id="YEAST:MONOMER3O-214"/>
<dbReference type="UniPathway" id="UPA00028">
    <property type="reaction ID" value="UER00004"/>
</dbReference>
<dbReference type="PRO" id="PR:P38787"/>
<dbReference type="Proteomes" id="UP000002311">
    <property type="component" value="Chromosome VIII"/>
</dbReference>
<dbReference type="RNAct" id="P38787">
    <property type="molecule type" value="protein"/>
</dbReference>
<dbReference type="GO" id="GO:0005737">
    <property type="term" value="C:cytoplasm"/>
    <property type="evidence" value="ECO:0007005"/>
    <property type="project" value="SGD"/>
</dbReference>
<dbReference type="GO" id="GO:0005739">
    <property type="term" value="C:mitochondrion"/>
    <property type="evidence" value="ECO:0000318"/>
    <property type="project" value="GO_Central"/>
</dbReference>
<dbReference type="GO" id="GO:0008677">
    <property type="term" value="F:2-dehydropantoate 2-reductase activity"/>
    <property type="evidence" value="ECO:0000250"/>
    <property type="project" value="SGD"/>
</dbReference>
<dbReference type="GO" id="GO:0050661">
    <property type="term" value="F:NADP binding"/>
    <property type="evidence" value="ECO:0000318"/>
    <property type="project" value="GO_Central"/>
</dbReference>
<dbReference type="GO" id="GO:0015940">
    <property type="term" value="P:pantothenate biosynthetic process"/>
    <property type="evidence" value="ECO:0000305"/>
    <property type="project" value="SGD"/>
</dbReference>
<dbReference type="FunFam" id="1.10.1040.10:FF:000047">
    <property type="entry name" value="2-dehydropantoate 2-reductase"/>
    <property type="match status" value="1"/>
</dbReference>
<dbReference type="Gene3D" id="1.10.1040.10">
    <property type="entry name" value="N-(1-d-carboxylethyl)-l-norvaline Dehydrogenase, domain 2"/>
    <property type="match status" value="1"/>
</dbReference>
<dbReference type="Gene3D" id="3.40.50.720">
    <property type="entry name" value="NAD(P)-binding Rossmann-like Domain"/>
    <property type="match status" value="1"/>
</dbReference>
<dbReference type="InterPro" id="IPR008927">
    <property type="entry name" value="6-PGluconate_DH-like_C_sf"/>
</dbReference>
<dbReference type="InterPro" id="IPR013328">
    <property type="entry name" value="6PGD_dom2"/>
</dbReference>
<dbReference type="InterPro" id="IPR003710">
    <property type="entry name" value="ApbA"/>
</dbReference>
<dbReference type="InterPro" id="IPR050838">
    <property type="entry name" value="Ketopantoate_reductase"/>
</dbReference>
<dbReference type="InterPro" id="IPR013752">
    <property type="entry name" value="KPA_reductase"/>
</dbReference>
<dbReference type="InterPro" id="IPR013332">
    <property type="entry name" value="KPR_N"/>
</dbReference>
<dbReference type="InterPro" id="IPR036291">
    <property type="entry name" value="NAD(P)-bd_dom_sf"/>
</dbReference>
<dbReference type="NCBIfam" id="TIGR00745">
    <property type="entry name" value="apbA_panE"/>
    <property type="match status" value="1"/>
</dbReference>
<dbReference type="PANTHER" id="PTHR43765:SF2">
    <property type="entry name" value="2-DEHYDROPANTOATE 2-REDUCTASE"/>
    <property type="match status" value="1"/>
</dbReference>
<dbReference type="PANTHER" id="PTHR43765">
    <property type="entry name" value="2-DEHYDROPANTOATE 2-REDUCTASE-RELATED"/>
    <property type="match status" value="1"/>
</dbReference>
<dbReference type="Pfam" id="PF02558">
    <property type="entry name" value="ApbA"/>
    <property type="match status" value="1"/>
</dbReference>
<dbReference type="Pfam" id="PF08546">
    <property type="entry name" value="ApbA_C"/>
    <property type="match status" value="1"/>
</dbReference>
<dbReference type="SUPFAM" id="SSF48179">
    <property type="entry name" value="6-phosphogluconate dehydrogenase C-terminal domain-like"/>
    <property type="match status" value="1"/>
</dbReference>
<dbReference type="SUPFAM" id="SSF51735">
    <property type="entry name" value="NAD(P)-binding Rossmann-fold domains"/>
    <property type="match status" value="1"/>
</dbReference>
<comment type="function">
    <text evidence="1">Catalyzes the NADPH-dependent reduction of ketopantoate into pantoic acid.</text>
</comment>
<comment type="catalytic activity">
    <reaction>
        <text>(R)-pantoate + NADP(+) = 2-dehydropantoate + NADPH + H(+)</text>
        <dbReference type="Rhea" id="RHEA:16233"/>
        <dbReference type="ChEBI" id="CHEBI:11561"/>
        <dbReference type="ChEBI" id="CHEBI:15378"/>
        <dbReference type="ChEBI" id="CHEBI:15980"/>
        <dbReference type="ChEBI" id="CHEBI:57783"/>
        <dbReference type="ChEBI" id="CHEBI:58349"/>
        <dbReference type="EC" id="1.1.1.169"/>
    </reaction>
</comment>
<comment type="pathway">
    <text>Cofactor biosynthesis; (R)-pantothenate biosynthesis; (R)-pantoate from 3-methyl-2-oxobutanoate: step 2/2.</text>
</comment>
<comment type="miscellaneous">
    <text evidence="2">Present with 2600 molecules/cell in log phase SD medium.</text>
</comment>
<comment type="similarity">
    <text evidence="3">Belongs to the ketopantoate reductase family.</text>
</comment>
<feature type="chain" id="PRO_0000157328" description="2-dehydropantoate 2-reductase">
    <location>
        <begin position="1"/>
        <end position="379"/>
    </location>
</feature>
<feature type="active site" description="Proton donor" evidence="1">
    <location>
        <position position="224"/>
    </location>
</feature>
<feature type="binding site" evidence="1">
    <location>
        <begin position="13"/>
        <end position="18"/>
    </location>
    <ligand>
        <name>NADP(+)</name>
        <dbReference type="ChEBI" id="CHEBI:58349"/>
    </ligand>
</feature>
<feature type="binding site" evidence="1">
    <location>
        <position position="119"/>
    </location>
    <ligand>
        <name>NADP(+)</name>
        <dbReference type="ChEBI" id="CHEBI:58349"/>
    </ligand>
</feature>
<feature type="binding site" evidence="1">
    <location>
        <position position="119"/>
    </location>
    <ligand>
        <name>substrate</name>
    </ligand>
</feature>
<feature type="binding site" evidence="1">
    <location>
        <position position="228"/>
    </location>
    <ligand>
        <name>substrate</name>
    </ligand>
</feature>
<feature type="binding site" evidence="1">
    <location>
        <position position="232"/>
    </location>
    <ligand>
        <name>substrate</name>
    </ligand>
</feature>
<feature type="binding site" evidence="1">
    <location>
        <position position="316"/>
    </location>
    <ligand>
        <name>substrate</name>
    </ligand>
</feature>
<feature type="binding site" evidence="1">
    <location>
        <position position="328"/>
    </location>
    <ligand>
        <name>NADP(+)</name>
        <dbReference type="ChEBI" id="CHEBI:58349"/>
    </ligand>
</feature>
<accession>P38787</accession>
<accession>D3DL12</accession>